<feature type="chain" id="PRO_1000165606" description="Small ribosomal subunit protein uS13">
    <location>
        <begin position="1"/>
        <end position="118"/>
    </location>
</feature>
<feature type="region of interest" description="Disordered" evidence="2">
    <location>
        <begin position="94"/>
        <end position="118"/>
    </location>
</feature>
<reference key="1">
    <citation type="journal article" date="2009" name="Science">
        <title>The dynamics and time scale of ongoing genomic erosion in symbiotic bacteria.</title>
        <authorList>
            <person name="Moran N.A."/>
            <person name="McLaughlin H.J."/>
            <person name="Sorek R."/>
        </authorList>
    </citation>
    <scope>NUCLEOTIDE SEQUENCE [LARGE SCALE GENOMIC DNA]</scope>
    <source>
        <strain>5A</strain>
    </source>
</reference>
<comment type="function">
    <text evidence="1">Located at the top of the head of the 30S subunit, it contacts several helices of the 16S rRNA. In the 70S ribosome it contacts the 23S rRNA (bridge B1a) and protein L5 of the 50S subunit (bridge B1b), connecting the 2 subunits; these bridges are implicated in subunit movement. Contacts the tRNAs in the A and P-sites.</text>
</comment>
<comment type="subunit">
    <text evidence="1">Part of the 30S ribosomal subunit. Forms a loose heterodimer with protein S19. Forms two bridges to the 50S subunit in the 70S ribosome.</text>
</comment>
<comment type="similarity">
    <text evidence="1">Belongs to the universal ribosomal protein uS13 family.</text>
</comment>
<evidence type="ECO:0000255" key="1">
    <source>
        <dbReference type="HAMAP-Rule" id="MF_01315"/>
    </source>
</evidence>
<evidence type="ECO:0000256" key="2">
    <source>
        <dbReference type="SAM" id="MobiDB-lite"/>
    </source>
</evidence>
<evidence type="ECO:0000305" key="3"/>
<name>RS13_BUCA5</name>
<protein>
    <recommendedName>
        <fullName evidence="1">Small ribosomal subunit protein uS13</fullName>
    </recommendedName>
    <alternativeName>
        <fullName evidence="3">30S ribosomal protein S13</fullName>
    </alternativeName>
</protein>
<sequence length="118" mass="13546">MARIAGINIPENKHTLIALTAIYGIGKKRSKFICSIANIPEHSKIVDLNEEQIDLLRTHVAKYVIEGDLRRERTLNIKRLIDLSCYRGLRHRRSLPVHGQRTKTNARTCKGPRKPIKK</sequence>
<organism>
    <name type="scientific">Buchnera aphidicola subsp. Acyrthosiphon pisum (strain 5A)</name>
    <dbReference type="NCBI Taxonomy" id="563178"/>
    <lineage>
        <taxon>Bacteria</taxon>
        <taxon>Pseudomonadati</taxon>
        <taxon>Pseudomonadota</taxon>
        <taxon>Gammaproteobacteria</taxon>
        <taxon>Enterobacterales</taxon>
        <taxon>Erwiniaceae</taxon>
        <taxon>Buchnera</taxon>
    </lineage>
</organism>
<accession>B8D9S5</accession>
<keyword id="KW-0687">Ribonucleoprotein</keyword>
<keyword id="KW-0689">Ribosomal protein</keyword>
<keyword id="KW-0694">RNA-binding</keyword>
<keyword id="KW-0699">rRNA-binding</keyword>
<keyword id="KW-0820">tRNA-binding</keyword>
<dbReference type="EMBL" id="CP001161">
    <property type="protein sequence ID" value="ACL30846.1"/>
    <property type="molecule type" value="Genomic_DNA"/>
</dbReference>
<dbReference type="RefSeq" id="WP_009874453.1">
    <property type="nucleotide sequence ID" value="NC_011833.1"/>
</dbReference>
<dbReference type="SMR" id="B8D9S5"/>
<dbReference type="KEGG" id="bap:BUAP5A_495"/>
<dbReference type="HOGENOM" id="CLU_103849_1_2_6"/>
<dbReference type="OrthoDB" id="9803610at2"/>
<dbReference type="Proteomes" id="UP000006904">
    <property type="component" value="Chromosome"/>
</dbReference>
<dbReference type="GO" id="GO:0005829">
    <property type="term" value="C:cytosol"/>
    <property type="evidence" value="ECO:0007669"/>
    <property type="project" value="TreeGrafter"/>
</dbReference>
<dbReference type="GO" id="GO:0015935">
    <property type="term" value="C:small ribosomal subunit"/>
    <property type="evidence" value="ECO:0007669"/>
    <property type="project" value="TreeGrafter"/>
</dbReference>
<dbReference type="GO" id="GO:0019843">
    <property type="term" value="F:rRNA binding"/>
    <property type="evidence" value="ECO:0007669"/>
    <property type="project" value="UniProtKB-UniRule"/>
</dbReference>
<dbReference type="GO" id="GO:0003735">
    <property type="term" value="F:structural constituent of ribosome"/>
    <property type="evidence" value="ECO:0007669"/>
    <property type="project" value="InterPro"/>
</dbReference>
<dbReference type="GO" id="GO:0000049">
    <property type="term" value="F:tRNA binding"/>
    <property type="evidence" value="ECO:0007669"/>
    <property type="project" value="UniProtKB-UniRule"/>
</dbReference>
<dbReference type="GO" id="GO:0006412">
    <property type="term" value="P:translation"/>
    <property type="evidence" value="ECO:0007669"/>
    <property type="project" value="UniProtKB-UniRule"/>
</dbReference>
<dbReference type="FunFam" id="1.10.8.50:FF:000001">
    <property type="entry name" value="30S ribosomal protein S13"/>
    <property type="match status" value="1"/>
</dbReference>
<dbReference type="FunFam" id="4.10.910.10:FF:000001">
    <property type="entry name" value="30S ribosomal protein S13"/>
    <property type="match status" value="1"/>
</dbReference>
<dbReference type="Gene3D" id="1.10.8.50">
    <property type="match status" value="1"/>
</dbReference>
<dbReference type="Gene3D" id="4.10.910.10">
    <property type="entry name" value="30s ribosomal protein s13, domain 2"/>
    <property type="match status" value="1"/>
</dbReference>
<dbReference type="HAMAP" id="MF_01315">
    <property type="entry name" value="Ribosomal_uS13"/>
    <property type="match status" value="1"/>
</dbReference>
<dbReference type="InterPro" id="IPR027437">
    <property type="entry name" value="Rbsml_uS13_C"/>
</dbReference>
<dbReference type="InterPro" id="IPR001892">
    <property type="entry name" value="Ribosomal_uS13"/>
</dbReference>
<dbReference type="InterPro" id="IPR010979">
    <property type="entry name" value="Ribosomal_uS13-like_H2TH"/>
</dbReference>
<dbReference type="InterPro" id="IPR019980">
    <property type="entry name" value="Ribosomal_uS13_bac-type"/>
</dbReference>
<dbReference type="InterPro" id="IPR018269">
    <property type="entry name" value="Ribosomal_uS13_CS"/>
</dbReference>
<dbReference type="NCBIfam" id="TIGR03631">
    <property type="entry name" value="uS13_bact"/>
    <property type="match status" value="1"/>
</dbReference>
<dbReference type="PANTHER" id="PTHR10871">
    <property type="entry name" value="30S RIBOSOMAL PROTEIN S13/40S RIBOSOMAL PROTEIN S18"/>
    <property type="match status" value="1"/>
</dbReference>
<dbReference type="PANTHER" id="PTHR10871:SF1">
    <property type="entry name" value="SMALL RIBOSOMAL SUBUNIT PROTEIN US13M"/>
    <property type="match status" value="1"/>
</dbReference>
<dbReference type="Pfam" id="PF00416">
    <property type="entry name" value="Ribosomal_S13"/>
    <property type="match status" value="1"/>
</dbReference>
<dbReference type="PIRSF" id="PIRSF002134">
    <property type="entry name" value="Ribosomal_S13"/>
    <property type="match status" value="1"/>
</dbReference>
<dbReference type="SUPFAM" id="SSF46946">
    <property type="entry name" value="S13-like H2TH domain"/>
    <property type="match status" value="1"/>
</dbReference>
<dbReference type="PROSITE" id="PS00646">
    <property type="entry name" value="RIBOSOMAL_S13_1"/>
    <property type="match status" value="1"/>
</dbReference>
<dbReference type="PROSITE" id="PS50159">
    <property type="entry name" value="RIBOSOMAL_S13_2"/>
    <property type="match status" value="1"/>
</dbReference>
<gene>
    <name evidence="1" type="primary">rpsM</name>
    <name type="ordered locus">BUAP5A_495</name>
</gene>
<proteinExistence type="inferred from homology"/>